<sequence>MSDQQKASLCPRLVDYMAIVGAHTTPPMPKGLQGLKAPPVQVPDLLRRYPPSDHADFPLPLDMVYFCQPEGCTSVGPRRTGSAIRDMTSFVFALTDKDSGKTRYGICVNFYRPIERPSSAAGSAGAGNDRPGNGGPGGHGGGAGGGAGGGGRGGRRSSAFRRESWRKSMERSSDSAFSSDYRSNVAPSDSDRELTSRRDSDQQRLHSHHSHHQPHHPSASPAVPKLGLMAPSADSESGGSHSPSPRASRKRTKLRNQSLTSLCIISHHPFFTTFRECLFILKKLIDACNESSSPKRVGASQKINRDNVWTVLTGHVSDATPSIVLHDVREIETWILRLLSTPVPVPGSTRVEVEVLSPTVHEPLLFALPDHTRFSLVDFPLHLPLELLGVETCLKVWTLIMQENKVLFQSRDYNALSMSVMAFVTMLYPLEYMFPVIPLLPTCLSCAEQLLLAPTPFVIGVPASFLVYKKNFRLPDDIWVVDLDSTKLTPPTGGYEEIPPLPEPEGTILKNHLKQALTSMTATNTAVSSQQLLPSVRDSLQEPPLLGVSQVRLPLQTPPHSAQASQRNSMSAQGTISSRQPSPMNSPALNPFVYGTDVDSVDVATRVAMVRFFNAQNTLANFAEHTRTLRLYPRPVVAFQINSFLRSRPRASQFLNQFARTQAVEFLAEWSLTPTNVAFLRVQTGVMDPMQVGDKPKWFAHALTPIRFSVWDDGSSLNGALRSLKQLECQPTDESGSDSEGADSSSSSYSSLSDFVSEMASSDLSPSLHDVFGSYNRPHVVPQTLSSNLDPALVYHPPSKLQYPEGIADAVASKEEEDEERADSPVSSSSSRSDLSSPSFNRDSEFDFQPKGGQTLGSTTVGSGAAAPSFELATPLAMRLEATIKMASIEQESDTVSTATGKTIAAGSKLQRHPSDSESRPEKKIPPPLTPPVKQPGVSNILARTGSSGSSSSSPGRQSSQSSLFENFASHAKELVRETTRQSSQEGLLAHVDKFTLHAKKAAGEASKQALEVSKQAAGVSKNTLEDLTYVGKSTLGDLTKTAKEAATKKGIIKIEEHSAGGAGPPPKSPGSQLATHKQVQQSGGQGGGNNFFSAIGTDFNGLASSTSTMFSGMFGKKSQQKQVPVQQKQPNVSAGKAKSGINFDPFPGRKGLVERTPLIKHSGPRQTQEELTRQQNQERSHSNAENQTFLKDVTNQVLAGEGVGWLKLNRFKKLMEDESYRTLVLSKLNKTLDKKIAPDDHIDDVCVTKPVWKGMLKCIQAIAGGLDVTFANFGLGGMASVFQLMEVAHTHYWSKEINEGSDMSSSLLSSHAASPMGSRENLRSPSSPNGSHSALGSEWASPQESRKSSTQLAHGGPGGSHSGAPINRRLSSADSQDGQSTTEMFKDMLSQKRSALKNMLTSFDSDTTTSKDSKKSSGNLWSGKSTLSAGFRYTGGHLINTSSSPSPDSPRVYLFEGLLGKDRLNLWNQMQFWEDAFLDAVSQERDMIGMDQGPIEMMERYKSLSESERKRLEHDEDRLLSTMLYNLTAILVMLNVAKDEIRRKIRRLLGKSHIGLVYSQEVHNVVDQINNLNGNDIDLKPLGSRLLHRQSFTVHQGTDVNGPLRFMEVRDDGLVLRSVDGTIVERWWYERLVNMTYSPKTKLLCLWRRNGGQTQLHKYYTRKCKELYNCIKEAMERGGTPTNVPELGGEFPVQDMNTGEGGLLQVCLEGVGLLFSNSKFFVRLDHIRKCFTQKGGIFVLEEYNPKTRNLIQRKYQSSMSDQICYSVLCVFSYVAAGQDQKKNPVVITPQIQDIHAQQKQKHQQQQQHQQPQQQQQPHQTTTQQNQPTAVASAVPTTTAPAGQVNPNRMTAKSQAGSISIRHTVPMQKPTITMSTVQPQARMPAQVATASVPVTVPVPPTPAPPTSNPAKLPQLPPRVPSQPSTESLASISSPPPKLRTPMSAPPGPPPAIPPRTGAISRSGSVPAARSFVRQASANSTPPQYTPQPPPPFVIPKRHSGLARASTLSSSTSPSMSSSSASNHPGHSQSQQRASHGSVAAVLQSMPEAEPGYGSGSGSISGSSSGSGSASGSIASASPQAHRKH</sequence>
<evidence type="ECO:0000250" key="1">
    <source>
        <dbReference type="UniProtKB" id="O08873"/>
    </source>
</evidence>
<evidence type="ECO:0000250" key="2">
    <source>
        <dbReference type="UniProtKB" id="Q8WXG6"/>
    </source>
</evidence>
<evidence type="ECO:0000255" key="3">
    <source>
        <dbReference type="PROSITE-ProRule" id="PRU00304"/>
    </source>
</evidence>
<evidence type="ECO:0000256" key="4">
    <source>
        <dbReference type="SAM" id="MobiDB-lite"/>
    </source>
</evidence>
<evidence type="ECO:0000269" key="5">
    <source>
    </source>
</evidence>
<evidence type="ECO:0000269" key="6">
    <source>
    </source>
</evidence>
<evidence type="ECO:0000269" key="7">
    <source>
    </source>
</evidence>
<evidence type="ECO:0000305" key="8"/>
<evidence type="ECO:0000312" key="9">
    <source>
        <dbReference type="EMBL" id="AAM50740.1"/>
    </source>
</evidence>
<evidence type="ECO:0000312" key="10">
    <source>
        <dbReference type="FlyBase" id="FBgn0030613"/>
    </source>
</evidence>
<comment type="function">
    <text evidence="1 2">Guanyl-nucleotide exchange factor that regulates small GTPases (By similarity). Converts GDP-bound inactive form of Rab3 to the GTP-bound active forms (By similarity).</text>
</comment>
<comment type="subcellular location">
    <subcellularLocation>
        <location evidence="2">Cell membrane</location>
    </subcellularLocation>
    <subcellularLocation>
        <location evidence="2">Cytoplasm</location>
    </subcellularLocation>
</comment>
<comment type="RNA editing">
    <location>
        <position position="2031" evidence="6 7"/>
    </location>
    <location>
        <position position="2063" evidence="6 7"/>
    </location>
    <text evidence="7">Partially edited. Target of Adar.</text>
</comment>
<comment type="similarity">
    <text evidence="8">Belongs to the MADD family.</text>
</comment>
<comment type="sequence caution" evidence="8">
    <conflict type="erroneous initiation">
        <sequence resource="EMBL-CDS" id="AAM50740"/>
    </conflict>
    <text>Truncated N-terminus.</text>
</comment>
<reference key="1">
    <citation type="journal article" date="2000" name="Science">
        <title>The genome sequence of Drosophila melanogaster.</title>
        <authorList>
            <person name="Adams M.D."/>
            <person name="Celniker S.E."/>
            <person name="Holt R.A."/>
            <person name="Evans C.A."/>
            <person name="Gocayne J.D."/>
            <person name="Amanatides P.G."/>
            <person name="Scherer S.E."/>
            <person name="Li P.W."/>
            <person name="Hoskins R.A."/>
            <person name="Galle R.F."/>
            <person name="George R.A."/>
            <person name="Lewis S.E."/>
            <person name="Richards S."/>
            <person name="Ashburner M."/>
            <person name="Henderson S.N."/>
            <person name="Sutton G.G."/>
            <person name="Wortman J.R."/>
            <person name="Yandell M.D."/>
            <person name="Zhang Q."/>
            <person name="Chen L.X."/>
            <person name="Brandon R.C."/>
            <person name="Rogers Y.-H.C."/>
            <person name="Blazej R.G."/>
            <person name="Champe M."/>
            <person name="Pfeiffer B.D."/>
            <person name="Wan K.H."/>
            <person name="Doyle C."/>
            <person name="Baxter E.G."/>
            <person name="Helt G."/>
            <person name="Nelson C.R."/>
            <person name="Miklos G.L.G."/>
            <person name="Abril J.F."/>
            <person name="Agbayani A."/>
            <person name="An H.-J."/>
            <person name="Andrews-Pfannkoch C."/>
            <person name="Baldwin D."/>
            <person name="Ballew R.M."/>
            <person name="Basu A."/>
            <person name="Baxendale J."/>
            <person name="Bayraktaroglu L."/>
            <person name="Beasley E.M."/>
            <person name="Beeson K.Y."/>
            <person name="Benos P.V."/>
            <person name="Berman B.P."/>
            <person name="Bhandari D."/>
            <person name="Bolshakov S."/>
            <person name="Borkova D."/>
            <person name="Botchan M.R."/>
            <person name="Bouck J."/>
            <person name="Brokstein P."/>
            <person name="Brottier P."/>
            <person name="Burtis K.C."/>
            <person name="Busam D.A."/>
            <person name="Butler H."/>
            <person name="Cadieu E."/>
            <person name="Center A."/>
            <person name="Chandra I."/>
            <person name="Cherry J.M."/>
            <person name="Cawley S."/>
            <person name="Dahlke C."/>
            <person name="Davenport L.B."/>
            <person name="Davies P."/>
            <person name="de Pablos B."/>
            <person name="Delcher A."/>
            <person name="Deng Z."/>
            <person name="Mays A.D."/>
            <person name="Dew I."/>
            <person name="Dietz S.M."/>
            <person name="Dodson K."/>
            <person name="Doup L.E."/>
            <person name="Downes M."/>
            <person name="Dugan-Rocha S."/>
            <person name="Dunkov B.C."/>
            <person name="Dunn P."/>
            <person name="Durbin K.J."/>
            <person name="Evangelista C.C."/>
            <person name="Ferraz C."/>
            <person name="Ferriera S."/>
            <person name="Fleischmann W."/>
            <person name="Fosler C."/>
            <person name="Gabrielian A.E."/>
            <person name="Garg N.S."/>
            <person name="Gelbart W.M."/>
            <person name="Glasser K."/>
            <person name="Glodek A."/>
            <person name="Gong F."/>
            <person name="Gorrell J.H."/>
            <person name="Gu Z."/>
            <person name="Guan P."/>
            <person name="Harris M."/>
            <person name="Harris N.L."/>
            <person name="Harvey D.A."/>
            <person name="Heiman T.J."/>
            <person name="Hernandez J.R."/>
            <person name="Houck J."/>
            <person name="Hostin D."/>
            <person name="Houston K.A."/>
            <person name="Howland T.J."/>
            <person name="Wei M.-H."/>
            <person name="Ibegwam C."/>
            <person name="Jalali M."/>
            <person name="Kalush F."/>
            <person name="Karpen G.H."/>
            <person name="Ke Z."/>
            <person name="Kennison J.A."/>
            <person name="Ketchum K.A."/>
            <person name="Kimmel B.E."/>
            <person name="Kodira C.D."/>
            <person name="Kraft C.L."/>
            <person name="Kravitz S."/>
            <person name="Kulp D."/>
            <person name="Lai Z."/>
            <person name="Lasko P."/>
            <person name="Lei Y."/>
            <person name="Levitsky A.A."/>
            <person name="Li J.H."/>
            <person name="Li Z."/>
            <person name="Liang Y."/>
            <person name="Lin X."/>
            <person name="Liu X."/>
            <person name="Mattei B."/>
            <person name="McIntosh T.C."/>
            <person name="McLeod M.P."/>
            <person name="McPherson D."/>
            <person name="Merkulov G."/>
            <person name="Milshina N.V."/>
            <person name="Mobarry C."/>
            <person name="Morris J."/>
            <person name="Moshrefi A."/>
            <person name="Mount S.M."/>
            <person name="Moy M."/>
            <person name="Murphy B."/>
            <person name="Murphy L."/>
            <person name="Muzny D.M."/>
            <person name="Nelson D.L."/>
            <person name="Nelson D.R."/>
            <person name="Nelson K.A."/>
            <person name="Nixon K."/>
            <person name="Nusskern D.R."/>
            <person name="Pacleb J.M."/>
            <person name="Palazzolo M."/>
            <person name="Pittman G.S."/>
            <person name="Pan S."/>
            <person name="Pollard J."/>
            <person name="Puri V."/>
            <person name="Reese M.G."/>
            <person name="Reinert K."/>
            <person name="Remington K."/>
            <person name="Saunders R.D.C."/>
            <person name="Scheeler F."/>
            <person name="Shen H."/>
            <person name="Shue B.C."/>
            <person name="Siden-Kiamos I."/>
            <person name="Simpson M."/>
            <person name="Skupski M.P."/>
            <person name="Smith T.J."/>
            <person name="Spier E."/>
            <person name="Spradling A.C."/>
            <person name="Stapleton M."/>
            <person name="Strong R."/>
            <person name="Sun E."/>
            <person name="Svirskas R."/>
            <person name="Tector C."/>
            <person name="Turner R."/>
            <person name="Venter E."/>
            <person name="Wang A.H."/>
            <person name="Wang X."/>
            <person name="Wang Z.-Y."/>
            <person name="Wassarman D.A."/>
            <person name="Weinstock G.M."/>
            <person name="Weissenbach J."/>
            <person name="Williams S.M."/>
            <person name="Woodage T."/>
            <person name="Worley K.C."/>
            <person name="Wu D."/>
            <person name="Yang S."/>
            <person name="Yao Q.A."/>
            <person name="Ye J."/>
            <person name="Yeh R.-F."/>
            <person name="Zaveri J.S."/>
            <person name="Zhan M."/>
            <person name="Zhang G."/>
            <person name="Zhao Q."/>
            <person name="Zheng L."/>
            <person name="Zheng X.H."/>
            <person name="Zhong F.N."/>
            <person name="Zhong W."/>
            <person name="Zhou X."/>
            <person name="Zhu S.C."/>
            <person name="Zhu X."/>
            <person name="Smith H.O."/>
            <person name="Gibbs R.A."/>
            <person name="Myers E.W."/>
            <person name="Rubin G.M."/>
            <person name="Venter J.C."/>
        </authorList>
    </citation>
    <scope>NUCLEOTIDE SEQUENCE [LARGE SCALE GENOMIC DNA]</scope>
    <source>
        <strain evidence="5">Berkeley</strain>
    </source>
</reference>
<reference evidence="8" key="2">
    <citation type="journal article" date="2002" name="Genome Biol.">
        <title>Annotation of the Drosophila melanogaster euchromatic genome: a systematic review.</title>
        <authorList>
            <person name="Misra S."/>
            <person name="Crosby M.A."/>
            <person name="Mungall C.J."/>
            <person name="Matthews B.B."/>
            <person name="Campbell K.S."/>
            <person name="Hradecky P."/>
            <person name="Huang Y."/>
            <person name="Kaminker J.S."/>
            <person name="Millburn G.H."/>
            <person name="Prochnik S.E."/>
            <person name="Smith C.D."/>
            <person name="Tupy J.L."/>
            <person name="Whitfield E.J."/>
            <person name="Bayraktaroglu L."/>
            <person name="Berman B.P."/>
            <person name="Bettencourt B.R."/>
            <person name="Celniker S.E."/>
            <person name="de Grey A.D.N.J."/>
            <person name="Drysdale R.A."/>
            <person name="Harris N.L."/>
            <person name="Richter J."/>
            <person name="Russo S."/>
            <person name="Schroeder A.J."/>
            <person name="Shu S.Q."/>
            <person name="Stapleton M."/>
            <person name="Yamada C."/>
            <person name="Ashburner M."/>
            <person name="Gelbart W.M."/>
            <person name="Rubin G.M."/>
            <person name="Lewis S.E."/>
        </authorList>
    </citation>
    <scope>GENOME REANNOTATION</scope>
    <source>
        <strain>Berkeley</strain>
    </source>
</reference>
<reference evidence="8 9" key="3">
    <citation type="journal article" date="2002" name="Genome Biol.">
        <title>A Drosophila full-length cDNA resource.</title>
        <authorList>
            <person name="Stapleton M."/>
            <person name="Carlson J.W."/>
            <person name="Brokstein P."/>
            <person name="Yu C."/>
            <person name="Champe M."/>
            <person name="George R.A."/>
            <person name="Guarin H."/>
            <person name="Kronmiller B."/>
            <person name="Pacleb J.M."/>
            <person name="Park S."/>
            <person name="Wan K.H."/>
            <person name="Rubin G.M."/>
            <person name="Celniker S.E."/>
        </authorList>
    </citation>
    <scope>NUCLEOTIDE SEQUENCE [LARGE SCALE MRNA] OF 1680-2084</scope>
    <scope>RNA EDITING OF POSITIONS 2031 AND 2063</scope>
    <source>
        <strain evidence="9">Berkeley</strain>
        <tissue evidence="6">Head</tissue>
    </source>
</reference>
<reference evidence="8" key="4">
    <citation type="journal article" date="2001" name="Biochem. Biophys. Res. Commun.">
        <title>uDENN, DENN, and dDENN: indissociable domains in Rab and MAP kinases signaling pathways.</title>
        <authorList>
            <person name="Levivier E."/>
            <person name="Goud B."/>
            <person name="Souchet M."/>
            <person name="Calmels T.P.G."/>
            <person name="Mornon J.-P."/>
            <person name="Callebaut I."/>
        </authorList>
    </citation>
    <scope>IDENTIFICATION</scope>
</reference>
<reference evidence="8" key="5">
    <citation type="journal article" date="2000" name="Neuron">
        <title>A genome-wide search for synaptic vesicle cycle proteins in Drosophila.</title>
        <authorList>
            <person name="Lloyd T.E."/>
            <person name="Verstreken P."/>
            <person name="Ostrin E.J."/>
            <person name="Phillippi A."/>
            <person name="Lichtarge O."/>
            <person name="Bellen H.J."/>
        </authorList>
    </citation>
    <scope>IDENTIFICATION</scope>
</reference>
<reference evidence="8" key="6">
    <citation type="journal article" date="2006" name="RNA">
        <title>RNA editing in Drosophila melanogaster: new targets and functional consequences.</title>
        <authorList>
            <person name="Stapleton M."/>
            <person name="Carlson J.W."/>
            <person name="Celniker S.E."/>
        </authorList>
    </citation>
    <scope>RNA EDITING OF POSITIONS 2031 AND 2063</scope>
</reference>
<proteinExistence type="evidence at transcript level"/>
<gene>
    <name evidence="10" type="primary">Rab3-GEF</name>
    <name evidence="10" type="ORF">CG5627</name>
</gene>
<feature type="chain" id="PRO_0000278141" description="MAP kinase-activating death domain protein">
    <location>
        <begin position="1"/>
        <end position="2084"/>
    </location>
</feature>
<feature type="domain" description="uDENN" evidence="3">
    <location>
        <begin position="25"/>
        <end position="352"/>
    </location>
</feature>
<feature type="domain" description="cDENN" evidence="3">
    <location>
        <begin position="373"/>
        <end position="514"/>
    </location>
</feature>
<feature type="domain" description="dDENN" evidence="3">
    <location>
        <begin position="516"/>
        <end position="678"/>
    </location>
</feature>
<feature type="domain" description="Death">
    <location>
        <begin position="1490"/>
        <end position="1565"/>
    </location>
</feature>
<feature type="region of interest" description="Disordered" evidence="4">
    <location>
        <begin position="117"/>
        <end position="253"/>
    </location>
</feature>
<feature type="region of interest" description="Disordered" evidence="4">
    <location>
        <begin position="557"/>
        <end position="588"/>
    </location>
</feature>
<feature type="region of interest" description="Disordered" evidence="4">
    <location>
        <begin position="730"/>
        <end position="749"/>
    </location>
</feature>
<feature type="region of interest" description="Disordered" evidence="4">
    <location>
        <begin position="811"/>
        <end position="863"/>
    </location>
</feature>
<feature type="region of interest" description="Disordered" evidence="4">
    <location>
        <begin position="891"/>
        <end position="963"/>
    </location>
</feature>
<feature type="region of interest" description="Disordered" evidence="4">
    <location>
        <begin position="1058"/>
        <end position="1092"/>
    </location>
</feature>
<feature type="region of interest" description="Disordered" evidence="4">
    <location>
        <begin position="1115"/>
        <end position="1188"/>
    </location>
</feature>
<feature type="region of interest" description="Disordered" evidence="4">
    <location>
        <begin position="1305"/>
        <end position="1382"/>
    </location>
</feature>
<feature type="region of interest" description="Disordered" evidence="4">
    <location>
        <begin position="1794"/>
        <end position="1865"/>
    </location>
</feature>
<feature type="region of interest" description="Disordered" evidence="4">
    <location>
        <begin position="1896"/>
        <end position="2084"/>
    </location>
</feature>
<feature type="compositionally biased region" description="Low complexity" evidence="4">
    <location>
        <begin position="118"/>
        <end position="131"/>
    </location>
</feature>
<feature type="compositionally biased region" description="Gly residues" evidence="4">
    <location>
        <begin position="132"/>
        <end position="152"/>
    </location>
</feature>
<feature type="compositionally biased region" description="Basic and acidic residues" evidence="4">
    <location>
        <begin position="160"/>
        <end position="173"/>
    </location>
</feature>
<feature type="compositionally biased region" description="Low complexity" evidence="4">
    <location>
        <begin position="174"/>
        <end position="183"/>
    </location>
</feature>
<feature type="compositionally biased region" description="Basic and acidic residues" evidence="4">
    <location>
        <begin position="189"/>
        <end position="204"/>
    </location>
</feature>
<feature type="compositionally biased region" description="Basic residues" evidence="4">
    <location>
        <begin position="205"/>
        <end position="215"/>
    </location>
</feature>
<feature type="compositionally biased region" description="Polar residues" evidence="4">
    <location>
        <begin position="234"/>
        <end position="245"/>
    </location>
</feature>
<feature type="compositionally biased region" description="Polar residues" evidence="4">
    <location>
        <begin position="558"/>
        <end position="588"/>
    </location>
</feature>
<feature type="compositionally biased region" description="Low complexity" evidence="4">
    <location>
        <begin position="824"/>
        <end position="839"/>
    </location>
</feature>
<feature type="compositionally biased region" description="Basic and acidic residues" evidence="4">
    <location>
        <begin position="913"/>
        <end position="925"/>
    </location>
</feature>
<feature type="compositionally biased region" description="Low complexity" evidence="4">
    <location>
        <begin position="946"/>
        <end position="963"/>
    </location>
</feature>
<feature type="compositionally biased region" description="Low complexity" evidence="4">
    <location>
        <begin position="1121"/>
        <end position="1131"/>
    </location>
</feature>
<feature type="compositionally biased region" description="Basic and acidic residues" evidence="4">
    <location>
        <begin position="1168"/>
        <end position="1183"/>
    </location>
</feature>
<feature type="compositionally biased region" description="Low complexity" evidence="4">
    <location>
        <begin position="1305"/>
        <end position="1315"/>
    </location>
</feature>
<feature type="compositionally biased region" description="Polar residues" evidence="4">
    <location>
        <begin position="1324"/>
        <end position="1353"/>
    </location>
</feature>
<feature type="compositionally biased region" description="Polar residues" evidence="4">
    <location>
        <begin position="1370"/>
        <end position="1382"/>
    </location>
</feature>
<feature type="compositionally biased region" description="Low complexity" evidence="4">
    <location>
        <begin position="1794"/>
        <end position="1842"/>
    </location>
</feature>
<feature type="compositionally biased region" description="Polar residues" evidence="4">
    <location>
        <begin position="1845"/>
        <end position="1858"/>
    </location>
</feature>
<feature type="compositionally biased region" description="Pro residues" evidence="4">
    <location>
        <begin position="1896"/>
        <end position="1907"/>
    </location>
</feature>
<feature type="compositionally biased region" description="Polar residues" evidence="4">
    <location>
        <begin position="1921"/>
        <end position="1932"/>
    </location>
</feature>
<feature type="compositionally biased region" description="Pro residues" evidence="4">
    <location>
        <begin position="1933"/>
        <end position="1953"/>
    </location>
</feature>
<feature type="compositionally biased region" description="Pro residues" evidence="4">
    <location>
        <begin position="1983"/>
        <end position="1993"/>
    </location>
</feature>
<feature type="compositionally biased region" description="Low complexity" evidence="4">
    <location>
        <begin position="2001"/>
        <end position="2029"/>
    </location>
</feature>
<feature type="compositionally biased region" description="Low complexity" evidence="4">
    <location>
        <begin position="2059"/>
        <end position="2077"/>
    </location>
</feature>
<feature type="sequence variant" description="In RNA edited version.">
    <original>Q</original>
    <variation>R</variation>
    <location>
        <position position="2031"/>
    </location>
</feature>
<feature type="sequence variant" description="In RNA edited version.">
    <original>S</original>
    <variation>G</variation>
    <location>
        <position position="2063"/>
    </location>
</feature>
<name>MADD_DROME</name>
<organism>
    <name type="scientific">Drosophila melanogaster</name>
    <name type="common">Fruit fly</name>
    <dbReference type="NCBI Taxonomy" id="7227"/>
    <lineage>
        <taxon>Eukaryota</taxon>
        <taxon>Metazoa</taxon>
        <taxon>Ecdysozoa</taxon>
        <taxon>Arthropoda</taxon>
        <taxon>Hexapoda</taxon>
        <taxon>Insecta</taxon>
        <taxon>Pterygota</taxon>
        <taxon>Neoptera</taxon>
        <taxon>Endopterygota</taxon>
        <taxon>Diptera</taxon>
        <taxon>Brachycera</taxon>
        <taxon>Muscomorpha</taxon>
        <taxon>Ephydroidea</taxon>
        <taxon>Drosophilidae</taxon>
        <taxon>Drosophila</taxon>
        <taxon>Sophophora</taxon>
    </lineage>
</organism>
<dbReference type="EMBL" id="AE014298">
    <property type="protein sequence ID" value="AAF48424.2"/>
    <property type="molecule type" value="Genomic_DNA"/>
</dbReference>
<dbReference type="EMBL" id="AY118880">
    <property type="protein sequence ID" value="AAM50740.1"/>
    <property type="status" value="ALT_INIT"/>
    <property type="molecule type" value="mRNA"/>
</dbReference>
<dbReference type="RefSeq" id="NP_573001.2">
    <property type="nucleotide sequence ID" value="NM_132773.3"/>
</dbReference>
<dbReference type="BioGRID" id="58797">
    <property type="interactions" value="2"/>
</dbReference>
<dbReference type="FunCoup" id="Q9VXY2">
    <property type="interactions" value="188"/>
</dbReference>
<dbReference type="IntAct" id="Q9VXY2">
    <property type="interactions" value="2"/>
</dbReference>
<dbReference type="STRING" id="7227.FBpp0303427"/>
<dbReference type="GlyGen" id="Q9VXY2">
    <property type="glycosylation" value="3 sites, 1 O-linked glycan (1 site)"/>
</dbReference>
<dbReference type="PaxDb" id="7227-FBpp0298037"/>
<dbReference type="EnsemblMetazoa" id="FBtr0307207">
    <property type="protein sequence ID" value="FBpp0298036"/>
    <property type="gene ID" value="FBgn0030613"/>
</dbReference>
<dbReference type="GeneID" id="32442"/>
<dbReference type="KEGG" id="dme:Dmel_CG5627"/>
<dbReference type="UCSC" id="CG5627-RA">
    <property type="organism name" value="d. melanogaster"/>
</dbReference>
<dbReference type="AGR" id="FB:FBgn0030613"/>
<dbReference type="CTD" id="32442"/>
<dbReference type="FlyBase" id="FBgn0030613">
    <property type="gene designation" value="Rab3-GEF"/>
</dbReference>
<dbReference type="VEuPathDB" id="VectorBase:FBgn0030613"/>
<dbReference type="eggNOG" id="KOG3570">
    <property type="taxonomic scope" value="Eukaryota"/>
</dbReference>
<dbReference type="GeneTree" id="ENSGT00940000156718"/>
<dbReference type="InParanoid" id="Q9VXY2"/>
<dbReference type="OrthoDB" id="6282239at2759"/>
<dbReference type="Reactome" id="R-DME-8876198">
    <property type="pathway name" value="RAB GEFs exchange GTP for GDP on RABs"/>
</dbReference>
<dbReference type="BioGRID-ORCS" id="32442">
    <property type="hits" value="0 hits in 1 CRISPR screen"/>
</dbReference>
<dbReference type="GenomeRNAi" id="32442"/>
<dbReference type="PRO" id="PR:Q9VXY2"/>
<dbReference type="Proteomes" id="UP000000803">
    <property type="component" value="Chromosome X"/>
</dbReference>
<dbReference type="Bgee" id="FBgn0030613">
    <property type="expression patterns" value="Expressed in medullary intrinsic neuron Mi1 (Drosophila) in insect head and 159 other cell types or tissues"/>
</dbReference>
<dbReference type="ExpressionAtlas" id="Q9VXY2">
    <property type="expression patterns" value="baseline and differential"/>
</dbReference>
<dbReference type="GO" id="GO:0005829">
    <property type="term" value="C:cytosol"/>
    <property type="evidence" value="ECO:0000318"/>
    <property type="project" value="GO_Central"/>
</dbReference>
<dbReference type="GO" id="GO:0016020">
    <property type="term" value="C:membrane"/>
    <property type="evidence" value="ECO:0000250"/>
    <property type="project" value="UniProtKB"/>
</dbReference>
<dbReference type="GO" id="GO:0098527">
    <property type="term" value="C:neuromuscular junction of somatic muscle"/>
    <property type="evidence" value="ECO:0000314"/>
    <property type="project" value="FlyBase"/>
</dbReference>
<dbReference type="GO" id="GO:0043025">
    <property type="term" value="C:neuronal cell body"/>
    <property type="evidence" value="ECO:0000314"/>
    <property type="project" value="FlyBase"/>
</dbReference>
<dbReference type="GO" id="GO:0005886">
    <property type="term" value="C:plasma membrane"/>
    <property type="evidence" value="ECO:0007669"/>
    <property type="project" value="UniProtKB-SubCell"/>
</dbReference>
<dbReference type="GO" id="GO:0008021">
    <property type="term" value="C:synaptic vesicle"/>
    <property type="evidence" value="ECO:0000303"/>
    <property type="project" value="FlyBase"/>
</dbReference>
<dbReference type="GO" id="GO:0043195">
    <property type="term" value="C:terminal bouton"/>
    <property type="evidence" value="ECO:0000314"/>
    <property type="project" value="FlyBase"/>
</dbReference>
<dbReference type="GO" id="GO:0005085">
    <property type="term" value="F:guanyl-nucleotide exchange factor activity"/>
    <property type="evidence" value="ECO:0000250"/>
    <property type="project" value="UniProtKB"/>
</dbReference>
<dbReference type="GO" id="GO:0006915">
    <property type="term" value="P:apoptotic process"/>
    <property type="evidence" value="ECO:0007669"/>
    <property type="project" value="UniProtKB-KW"/>
</dbReference>
<dbReference type="GO" id="GO:0048789">
    <property type="term" value="P:cytoskeletal matrix organization at active zone"/>
    <property type="evidence" value="ECO:0000315"/>
    <property type="project" value="FlyBase"/>
</dbReference>
<dbReference type="GO" id="GO:0007269">
    <property type="term" value="P:neurotransmitter secretion"/>
    <property type="evidence" value="ECO:0000303"/>
    <property type="project" value="FlyBase"/>
</dbReference>
<dbReference type="GO" id="GO:0043410">
    <property type="term" value="P:positive regulation of MAPK cascade"/>
    <property type="evidence" value="ECO:0000250"/>
    <property type="project" value="UniProtKB"/>
</dbReference>
<dbReference type="GO" id="GO:0042981">
    <property type="term" value="P:regulation of apoptotic process"/>
    <property type="evidence" value="ECO:0000318"/>
    <property type="project" value="GO_Central"/>
</dbReference>
<dbReference type="GO" id="GO:0051726">
    <property type="term" value="P:regulation of cell cycle"/>
    <property type="evidence" value="ECO:0000250"/>
    <property type="project" value="UniProtKB"/>
</dbReference>
<dbReference type="GO" id="GO:1902041">
    <property type="term" value="P:regulation of extrinsic apoptotic signaling pathway via death domain receptors"/>
    <property type="evidence" value="ECO:0000250"/>
    <property type="project" value="UniProtKB"/>
</dbReference>
<dbReference type="GO" id="GO:0032483">
    <property type="term" value="P:regulation of Rab protein signal transduction"/>
    <property type="evidence" value="ECO:0000250"/>
    <property type="project" value="FlyBase"/>
</dbReference>
<dbReference type="GO" id="GO:0016192">
    <property type="term" value="P:vesicle-mediated transport"/>
    <property type="evidence" value="ECO:0000303"/>
    <property type="project" value="FlyBase"/>
</dbReference>
<dbReference type="FunFam" id="3.30.450.200:FF:000007">
    <property type="entry name" value="MAP kinase-activating death domain protein isoform X10"/>
    <property type="match status" value="1"/>
</dbReference>
<dbReference type="FunFam" id="3.40.50.11500:FF:000002">
    <property type="entry name" value="MAP kinase-activating death domain protein-like Protein"/>
    <property type="match status" value="1"/>
</dbReference>
<dbReference type="Gene3D" id="3.30.450.200">
    <property type="match status" value="1"/>
</dbReference>
<dbReference type="Gene3D" id="3.40.50.11500">
    <property type="match status" value="1"/>
</dbReference>
<dbReference type="InterPro" id="IPR001194">
    <property type="entry name" value="cDENN_dom"/>
</dbReference>
<dbReference type="InterPro" id="IPR005112">
    <property type="entry name" value="dDENN_dom"/>
</dbReference>
<dbReference type="InterPro" id="IPR056574">
    <property type="entry name" value="Death_MADD"/>
</dbReference>
<dbReference type="InterPro" id="IPR043153">
    <property type="entry name" value="DENN_C"/>
</dbReference>
<dbReference type="InterPro" id="IPR039980">
    <property type="entry name" value="MADD"/>
</dbReference>
<dbReference type="InterPro" id="IPR037516">
    <property type="entry name" value="Tripartite_DENN"/>
</dbReference>
<dbReference type="InterPro" id="IPR005113">
    <property type="entry name" value="uDENN_dom"/>
</dbReference>
<dbReference type="PANTHER" id="PTHR13008:SF7">
    <property type="entry name" value="MAP KINASE-ACTIVATING DEATH DOMAIN PROTEIN"/>
    <property type="match status" value="1"/>
</dbReference>
<dbReference type="PANTHER" id="PTHR13008">
    <property type="entry name" value="MAP-KINASE ACTIVATING DEATH DOMAIN PROTEIN MADD /DENN/AEX-3 C.ELEGANS"/>
    <property type="match status" value="1"/>
</dbReference>
<dbReference type="Pfam" id="PF23629">
    <property type="entry name" value="Death_MADD"/>
    <property type="match status" value="1"/>
</dbReference>
<dbReference type="Pfam" id="PF02141">
    <property type="entry name" value="DENN"/>
    <property type="match status" value="1"/>
</dbReference>
<dbReference type="Pfam" id="PF25328">
    <property type="entry name" value="PH_MADD"/>
    <property type="match status" value="1"/>
</dbReference>
<dbReference type="Pfam" id="PF03456">
    <property type="entry name" value="uDENN"/>
    <property type="match status" value="1"/>
</dbReference>
<dbReference type="SMART" id="SM00801">
    <property type="entry name" value="dDENN"/>
    <property type="match status" value="1"/>
</dbReference>
<dbReference type="SMART" id="SM00799">
    <property type="entry name" value="DENN"/>
    <property type="match status" value="1"/>
</dbReference>
<dbReference type="SMART" id="SM00800">
    <property type="entry name" value="uDENN"/>
    <property type="match status" value="1"/>
</dbReference>
<dbReference type="PROSITE" id="PS50211">
    <property type="entry name" value="DENN"/>
    <property type="match status" value="1"/>
</dbReference>
<protein>
    <recommendedName>
        <fullName>MAP kinase-activating death domain protein</fullName>
    </recommendedName>
    <alternativeName>
        <fullName>Rab3 guanyl-nucleotide exchange factor</fullName>
    </alternativeName>
</protein>
<keyword id="KW-0053">Apoptosis</keyword>
<keyword id="KW-1003">Cell membrane</keyword>
<keyword id="KW-0963">Cytoplasm</keyword>
<keyword id="KW-0344">Guanine-nucleotide releasing factor</keyword>
<keyword id="KW-0472">Membrane</keyword>
<keyword id="KW-1185">Reference proteome</keyword>
<keyword id="KW-0691">RNA editing</keyword>
<accession>Q9VXY2</accession>
<accession>Q8MSD8</accession>